<organism>
    <name type="scientific">Mus musculus</name>
    <name type="common">Mouse</name>
    <dbReference type="NCBI Taxonomy" id="10090"/>
    <lineage>
        <taxon>Eukaryota</taxon>
        <taxon>Metazoa</taxon>
        <taxon>Chordata</taxon>
        <taxon>Craniata</taxon>
        <taxon>Vertebrata</taxon>
        <taxon>Euteleostomi</taxon>
        <taxon>Mammalia</taxon>
        <taxon>Eutheria</taxon>
        <taxon>Euarchontoglires</taxon>
        <taxon>Glires</taxon>
        <taxon>Rodentia</taxon>
        <taxon>Myomorpha</taxon>
        <taxon>Muroidea</taxon>
        <taxon>Muridae</taxon>
        <taxon>Murinae</taxon>
        <taxon>Mus</taxon>
        <taxon>Mus</taxon>
    </lineage>
</organism>
<accession>P68404</accession>
<accession>A0JNZ5</accession>
<accession>F2Z441</accession>
<accession>P04410</accession>
<accession>P04411</accession>
<name>KPCB_MOUSE</name>
<reference key="1">
    <citation type="journal article" date="1990" name="Nucleic Acids Res.">
        <title>Isolation of cloned mouse protein kinase C beta-II cDNA and its sequence.</title>
        <authorList>
            <person name="Tang Y.-M."/>
            <person name="Ashendel C.L."/>
        </authorList>
    </citation>
    <scope>NUCLEOTIDE SEQUENCE [MRNA] (ISOFORM BETA-I)</scope>
    <source>
        <strain>ICR X Swiss Webster</strain>
        <tissue>Brain</tissue>
    </source>
</reference>
<reference key="2">
    <citation type="submission" date="1991-04" db="EMBL/GenBank/DDBJ databases">
        <title>Nucleotide sequence of cDNA for mouse brain protein kinase C beta-I subspecies.</title>
        <authorList>
            <person name="Powell C.T."/>
        </authorList>
    </citation>
    <scope>NUCLEOTIDE SEQUENCE [MRNA] (ISOFORM BETA-II)</scope>
</reference>
<reference key="3">
    <citation type="journal article" date="2009" name="PLoS Biol.">
        <title>Lineage-specific biology revealed by a finished genome assembly of the mouse.</title>
        <authorList>
            <person name="Church D.M."/>
            <person name="Goodstadt L."/>
            <person name="Hillier L.W."/>
            <person name="Zody M.C."/>
            <person name="Goldstein S."/>
            <person name="She X."/>
            <person name="Bult C.J."/>
            <person name="Agarwala R."/>
            <person name="Cherry J.L."/>
            <person name="DiCuccio M."/>
            <person name="Hlavina W."/>
            <person name="Kapustin Y."/>
            <person name="Meric P."/>
            <person name="Maglott D."/>
            <person name="Birtle Z."/>
            <person name="Marques A.C."/>
            <person name="Graves T."/>
            <person name="Zhou S."/>
            <person name="Teague B."/>
            <person name="Potamousis K."/>
            <person name="Churas C."/>
            <person name="Place M."/>
            <person name="Herschleb J."/>
            <person name="Runnheim R."/>
            <person name="Forrest D."/>
            <person name="Amos-Landgraf J."/>
            <person name="Schwartz D.C."/>
            <person name="Cheng Z."/>
            <person name="Lindblad-Toh K."/>
            <person name="Eichler E.E."/>
            <person name="Ponting C.P."/>
        </authorList>
    </citation>
    <scope>NUCLEOTIDE SEQUENCE [LARGE SCALE GENOMIC DNA]</scope>
    <source>
        <strain>C57BL/6J</strain>
    </source>
</reference>
<reference key="4">
    <citation type="journal article" date="2004" name="Genome Res.">
        <title>The status, quality, and expansion of the NIH full-length cDNA project: the Mammalian Gene Collection (MGC).</title>
        <authorList>
            <consortium name="The MGC Project Team"/>
        </authorList>
    </citation>
    <scope>NUCLEOTIDE SEQUENCE [LARGE SCALE MRNA] (ISOFORMS BETA-I)</scope>
</reference>
<reference key="5">
    <citation type="journal article" date="1996" name="Science">
        <title>Immunodeficiency in protein kinase cbeta-deficient mice.</title>
        <authorList>
            <person name="Leitges M."/>
            <person name="Schmedt C."/>
            <person name="Guinamard R."/>
            <person name="Davoust J."/>
            <person name="Schaal S."/>
            <person name="Stabel S."/>
            <person name="Tarakhovsky A."/>
        </authorList>
    </citation>
    <scope>FUNCTION</scope>
    <scope>DISRUPTION PHENOTYPE</scope>
</reference>
<reference key="6">
    <citation type="journal article" date="1999" name="Endocrinology">
        <title>Effects of knockout of the protein kinase C beta gene on glucose transport and glucose homeostasis.</title>
        <authorList>
            <person name="Standaert M.L."/>
            <person name="Bandyopadhyay G."/>
            <person name="Galloway L."/>
            <person name="Soto J."/>
            <person name="Ono Y."/>
            <person name="Kikkawa U."/>
            <person name="Farese R.V."/>
            <person name="Leitges M."/>
        </authorList>
    </citation>
    <scope>FUNCTION IN INSULIN SIGNALING</scope>
</reference>
<reference key="7">
    <citation type="journal article" date="2002" name="J. Exp. Med.">
        <title>Protein kinase C beta controls nuclear factor kappaB activation in B cells through selective regulation of the IkappaB kinase alpha.</title>
        <authorList>
            <person name="Saijo K."/>
            <person name="Mecklenbrauker I."/>
            <person name="Santana A."/>
            <person name="Leitger M."/>
            <person name="Schmedt C."/>
            <person name="Tarakhovsky A."/>
        </authorList>
    </citation>
    <scope>FUNCTION</scope>
</reference>
<reference key="8">
    <citation type="journal article" date="2002" name="Nat. Immunol.">
        <title>PKC-beta controls I kappa B kinase lipid raft recruitment and activation in response to BCR signaling.</title>
        <authorList>
            <person name="Su T.T."/>
            <person name="Guo B."/>
            <person name="Kawakami Y."/>
            <person name="Sommer K."/>
            <person name="Chae K."/>
            <person name="Humphries L.A."/>
            <person name="Kato R.M."/>
            <person name="Kang S."/>
            <person name="Patrone L."/>
            <person name="Wall R."/>
            <person name="Teitell M."/>
            <person name="Leitges M."/>
            <person name="Kawakami T."/>
            <person name="Rawlings D.J."/>
        </authorList>
    </citation>
    <scope>FUNCTION</scope>
    <scope>DISRUPTION PHENOTYPE</scope>
</reference>
<reference key="9">
    <citation type="journal article" date="2002" name="Proc. Natl. Acad. Sci. U.S.A.">
        <title>Characterization of protein kinase C beta isoform's action on retinoblastoma protein phosphorylation, vascular endothelial growth factor-induced endothelial cell proliferation, and retinal neovascularization.</title>
        <authorList>
            <person name="Suzuma K."/>
            <person name="Takahara N."/>
            <person name="Suzuma I."/>
            <person name="Isshiki K."/>
            <person name="Ueki K."/>
            <person name="Leitges M."/>
            <person name="Aiello L.P."/>
            <person name="King G.L."/>
        </authorList>
    </citation>
    <scope>FUNCTION IN ENDOTHELIAL CELLS PROLIFERATION</scope>
</reference>
<reference key="10">
    <citation type="journal article" date="2003" name="Proc. Natl. Acad. Sci. U.S.A.">
        <title>A Ras activation pathway dependent on Syk phosphorylation of protein kinase C.</title>
        <authorList>
            <person name="Kawakami Y."/>
            <person name="Kitaura J."/>
            <person name="Yao L."/>
            <person name="McHenry R.W."/>
            <person name="Kawakami Y."/>
            <person name="Newton A.C."/>
            <person name="Kang S."/>
            <person name="Kato R.M."/>
            <person name="Leitges M."/>
            <person name="Rawlings D.J."/>
            <person name="Kawakami T."/>
        </authorList>
    </citation>
    <scope>PHOSPHORYLATION AT TYR-662</scope>
</reference>
<reference key="11">
    <citation type="journal article" date="2005" name="Immunity">
        <title>Phosphorylation of the CARMA1 linker controls NF-kappaB activation.</title>
        <authorList>
            <person name="Sommer K."/>
            <person name="Guo B."/>
            <person name="Pomerantz J.L."/>
            <person name="Bandaranayake A.D."/>
            <person name="Moreno-Garcia M.E."/>
            <person name="Ovechkina Y.L."/>
            <person name="Rawlings D.J."/>
        </authorList>
    </citation>
    <scope>FUNCTION</scope>
    <scope>INTERACTION WITH CARD11</scope>
</reference>
<reference key="12">
    <citation type="journal article" date="2005" name="J. Exp. Med.">
        <title>PKC beta regulates BCR-mediated IKK activation by facilitating the interaction between TAK1 and CARMA1.</title>
        <authorList>
            <person name="Shinohara H."/>
            <person name="Yasuda T."/>
            <person name="Aiba Y."/>
            <person name="Sanjo H."/>
            <person name="Hamadate M."/>
            <person name="Watarai H."/>
            <person name="Sakurai H."/>
            <person name="Kurosaki T."/>
        </authorList>
    </citation>
    <scope>FUNCTION IN NF-KAPPA-B ACTIVATION</scope>
</reference>
<reference key="13">
    <citation type="journal article" date="2006" name="Diabetes">
        <title>Activation of vascular protein kinase C-beta inhibits Akt-dependent endothelial nitric oxide synthase function in obesity-associated insulin resistance.</title>
        <authorList>
            <person name="Naruse K."/>
            <person name="Rask-Madsen C."/>
            <person name="Takahara N."/>
            <person name="Ha S.W."/>
            <person name="Suzuma K."/>
            <person name="Way K.J."/>
            <person name="Jacobs J.R."/>
            <person name="Clermont A.C."/>
            <person name="Ueki K."/>
            <person name="Ohshiro Y."/>
            <person name="Zhang J."/>
            <person name="Goldfine A.B."/>
            <person name="King G.L."/>
        </authorList>
    </citation>
    <scope>FUNCTION IN ENDOTHELIAL CELLS</scope>
</reference>
<reference key="14">
    <citation type="journal article" date="2006" name="Mol. Cell. Proteomics">
        <title>Comprehensive identification of phosphorylation sites in postsynaptic density preparations.</title>
        <authorList>
            <person name="Trinidad J.C."/>
            <person name="Specht C.G."/>
            <person name="Thalhammer A."/>
            <person name="Schoepfer R."/>
            <person name="Burlingame A.L."/>
        </authorList>
    </citation>
    <scope>PHOSPHORYLATION [LARGE SCALE ANALYSIS] AT THR-641 (ISOFORM BETA-II)</scope>
    <scope>IDENTIFICATION BY MASS SPECTROMETRY [LARGE SCALE ANALYSIS]</scope>
    <source>
        <tissue>Brain</tissue>
    </source>
</reference>
<reference key="15">
    <citation type="journal article" date="2007" name="Mol. Cell. Proteomics">
        <title>Qualitative and quantitative analyses of protein phosphorylation in naive and stimulated mouse synaptosomal preparations.</title>
        <authorList>
            <person name="Munton R.P."/>
            <person name="Tweedie-Cullen R."/>
            <person name="Livingstone-Zatchej M."/>
            <person name="Weinandy F."/>
            <person name="Waidelich M."/>
            <person name="Longo D."/>
            <person name="Gehrig P."/>
            <person name="Potthast F."/>
            <person name="Rutishauser D."/>
            <person name="Gerrits B."/>
            <person name="Panse C."/>
            <person name="Schlapbach R."/>
            <person name="Mansuy I.M."/>
        </authorList>
    </citation>
    <scope>IDENTIFICATION BY MASS SPECTROMETRY [LARGE SCALE ANALYSIS]</scope>
    <source>
        <tissue>Brain cortex</tissue>
    </source>
</reference>
<reference key="16">
    <citation type="journal article" date="2007" name="Science">
        <title>Protein kinase C beta and prolyl isomerase 1 regulate mitochondrial effects of the life-span determinant p66Shc.</title>
        <authorList>
            <person name="Pinton P."/>
            <person name="Rimessi A."/>
            <person name="Marchi S."/>
            <person name="Orsini F."/>
            <person name="Migliaccio E."/>
            <person name="Giorgio M."/>
            <person name="Contursi C."/>
            <person name="Minucci S."/>
            <person name="Mantovani F."/>
            <person name="Wieckowski M.R."/>
            <person name="Del Sal G."/>
            <person name="Pelicci P.G."/>
            <person name="Rizzuto R."/>
        </authorList>
    </citation>
    <scope>FUNCTION</scope>
</reference>
<reference key="17">
    <citation type="journal article" date="2008" name="J. Biol. Chem.">
        <title>Protein kinase C deficiency increases fatty acid oxidation and reduces fat storage.</title>
        <authorList>
            <person name="Bansode R.R."/>
            <person name="Huang W."/>
            <person name="Roy S.K."/>
            <person name="Mehta M."/>
            <person name="Mehta K.D."/>
        </authorList>
    </citation>
    <scope>DISRUPTION PHENOTYPE</scope>
</reference>
<reference key="18">
    <citation type="journal article" date="2010" name="Cell">
        <title>A tissue-specific atlas of mouse protein phosphorylation and expression.</title>
        <authorList>
            <person name="Huttlin E.L."/>
            <person name="Jedrychowski M.P."/>
            <person name="Elias J.E."/>
            <person name="Goswami T."/>
            <person name="Rad R."/>
            <person name="Beausoleil S.A."/>
            <person name="Villen J."/>
            <person name="Haas W."/>
            <person name="Sowa M.E."/>
            <person name="Gygi S.P."/>
        </authorList>
    </citation>
    <scope>PHOSPHORYLATION [LARGE SCALE ANALYSIS] AT THR-641; SER-654; SER-660; SER-664 AND SER-673 (ISOFORM BETA-II)</scope>
    <scope>IDENTIFICATION BY MASS SPECTROMETRY [LARGE SCALE ANALYSIS]</scope>
    <source>
        <tissue>Brain</tissue>
        <tissue>Brown adipose tissue</tissue>
        <tissue>Kidney</tissue>
        <tissue>Lung</tissue>
        <tissue>Spleen</tissue>
        <tissue>Testis</tissue>
    </source>
</reference>
<reference key="19">
    <citation type="journal article" date="2021" name="Sci. Signal.">
        <title>mTORC2 controls the activity of PKC and Akt by phosphorylating a conserved TOR interaction motif.</title>
        <authorList>
            <person name="Baffi T.R."/>
            <person name="Lorden G."/>
            <person name="Wozniak J.M."/>
            <person name="Feichtner A."/>
            <person name="Yeung W."/>
            <person name="Kornev A.P."/>
            <person name="King C.C."/>
            <person name="Del Rio J.C."/>
            <person name="Limaye A.J."/>
            <person name="Bogomolovas J."/>
            <person name="Gould C.M."/>
            <person name="Chen J."/>
            <person name="Kennedy E.J."/>
            <person name="Kannan N."/>
            <person name="Gonzalez D.J."/>
            <person name="Stefan E."/>
            <person name="Taylor S.S."/>
            <person name="Newton A.C."/>
        </authorList>
    </citation>
    <scope>PHOSPHORYLATION AT THR-634 (ISOFORM BETA-II)</scope>
</reference>
<proteinExistence type="evidence at protein level"/>
<evidence type="ECO:0000250" key="1"/>
<evidence type="ECO:0000250" key="2">
    <source>
        <dbReference type="UniProtKB" id="P05771"/>
    </source>
</evidence>
<evidence type="ECO:0000250" key="3">
    <source>
        <dbReference type="UniProtKB" id="P68403"/>
    </source>
</evidence>
<evidence type="ECO:0000255" key="4">
    <source>
        <dbReference type="PROSITE-ProRule" id="PRU00041"/>
    </source>
</evidence>
<evidence type="ECO:0000255" key="5">
    <source>
        <dbReference type="PROSITE-ProRule" id="PRU00159"/>
    </source>
</evidence>
<evidence type="ECO:0000255" key="6">
    <source>
        <dbReference type="PROSITE-ProRule" id="PRU00226"/>
    </source>
</evidence>
<evidence type="ECO:0000255" key="7">
    <source>
        <dbReference type="PROSITE-ProRule" id="PRU00618"/>
    </source>
</evidence>
<evidence type="ECO:0000255" key="8">
    <source>
        <dbReference type="PROSITE-ProRule" id="PRU10027"/>
    </source>
</evidence>
<evidence type="ECO:0000256" key="9">
    <source>
        <dbReference type="SAM" id="MobiDB-lite"/>
    </source>
</evidence>
<evidence type="ECO:0000269" key="10">
    <source>
    </source>
</evidence>
<evidence type="ECO:0000269" key="11">
    <source>
    </source>
</evidence>
<evidence type="ECO:0000269" key="12">
    <source>
    </source>
</evidence>
<evidence type="ECO:0000269" key="13">
    <source>
    </source>
</evidence>
<evidence type="ECO:0000269" key="14">
    <source>
    </source>
</evidence>
<evidence type="ECO:0000269" key="15">
    <source>
    </source>
</evidence>
<evidence type="ECO:0000269" key="16">
    <source>
    </source>
</evidence>
<evidence type="ECO:0000269" key="17">
    <source>
    </source>
</evidence>
<evidence type="ECO:0000269" key="18">
    <source>
    </source>
</evidence>
<evidence type="ECO:0000269" key="19">
    <source>
    </source>
</evidence>
<evidence type="ECO:0000269" key="20">
    <source>
    </source>
</evidence>
<evidence type="ECO:0000269" key="21">
    <source>
    </source>
</evidence>
<evidence type="ECO:0000303" key="22">
    <source ref="2"/>
</evidence>
<evidence type="ECO:0000305" key="23"/>
<evidence type="ECO:0007744" key="24">
    <source>
    </source>
</evidence>
<evidence type="ECO:0007744" key="25">
    <source>
    </source>
</evidence>
<gene>
    <name type="primary">Prkcb</name>
    <name type="synonym">Pkcb</name>
    <name type="synonym">Prkcb1</name>
</gene>
<feature type="initiator methionine" description="Removed" evidence="2">
    <location>
        <position position="1"/>
    </location>
</feature>
<feature type="chain" id="PRO_0000055685" description="Protein kinase C beta type">
    <location>
        <begin position="2"/>
        <end position="671"/>
    </location>
</feature>
<feature type="domain" description="C2" evidence="4">
    <location>
        <begin position="158"/>
        <end position="275"/>
    </location>
</feature>
<feature type="domain" description="Protein kinase" evidence="5">
    <location>
        <begin position="342"/>
        <end position="600"/>
    </location>
</feature>
<feature type="domain" description="AGC-kinase C-terminal" evidence="7">
    <location>
        <begin position="601"/>
        <end position="671"/>
    </location>
</feature>
<feature type="zinc finger region" description="Phorbol-ester/DAG-type 1" evidence="6">
    <location>
        <begin position="36"/>
        <end position="86"/>
    </location>
</feature>
<feature type="zinc finger region" description="Phorbol-ester/DAG-type 2" evidence="6">
    <location>
        <begin position="101"/>
        <end position="151"/>
    </location>
</feature>
<feature type="region of interest" description="Disordered" evidence="9">
    <location>
        <begin position="614"/>
        <end position="635"/>
    </location>
</feature>
<feature type="compositionally biased region" description="Basic and acidic residues" evidence="9">
    <location>
        <begin position="623"/>
        <end position="635"/>
    </location>
</feature>
<feature type="active site" description="Proton acceptor" evidence="5 8">
    <location>
        <position position="466"/>
    </location>
</feature>
<feature type="binding site" evidence="3">
    <location>
        <position position="186"/>
    </location>
    <ligand>
        <name>Ca(2+)</name>
        <dbReference type="ChEBI" id="CHEBI:29108"/>
        <label>1</label>
    </ligand>
</feature>
<feature type="binding site" evidence="3">
    <location>
        <position position="187"/>
    </location>
    <ligand>
        <name>Ca(2+)</name>
        <dbReference type="ChEBI" id="CHEBI:29108"/>
        <label>1</label>
    </ligand>
</feature>
<feature type="binding site" evidence="3">
    <location>
        <position position="187"/>
    </location>
    <ligand>
        <name>Ca(2+)</name>
        <dbReference type="ChEBI" id="CHEBI:29108"/>
        <label>2</label>
    </ligand>
</feature>
<feature type="binding site" evidence="3">
    <location>
        <position position="193"/>
    </location>
    <ligand>
        <name>Ca(2+)</name>
        <dbReference type="ChEBI" id="CHEBI:29108"/>
        <label>2</label>
    </ligand>
</feature>
<feature type="binding site" evidence="3">
    <location>
        <position position="246"/>
    </location>
    <ligand>
        <name>Ca(2+)</name>
        <dbReference type="ChEBI" id="CHEBI:29108"/>
        <label>1</label>
    </ligand>
</feature>
<feature type="binding site" evidence="3">
    <location>
        <position position="246"/>
    </location>
    <ligand>
        <name>Ca(2+)</name>
        <dbReference type="ChEBI" id="CHEBI:29108"/>
        <label>2</label>
    </ligand>
</feature>
<feature type="binding site" evidence="3">
    <location>
        <position position="247"/>
    </location>
    <ligand>
        <name>Ca(2+)</name>
        <dbReference type="ChEBI" id="CHEBI:29108"/>
        <label>2</label>
    </ligand>
</feature>
<feature type="binding site" evidence="3">
    <location>
        <position position="248"/>
    </location>
    <ligand>
        <name>Ca(2+)</name>
        <dbReference type="ChEBI" id="CHEBI:29108"/>
        <label>1</label>
    </ligand>
</feature>
<feature type="binding site" evidence="3">
    <location>
        <position position="248"/>
    </location>
    <ligand>
        <name>Ca(2+)</name>
        <dbReference type="ChEBI" id="CHEBI:29108"/>
        <label>2</label>
    </ligand>
</feature>
<feature type="binding site" evidence="3">
    <location>
        <position position="248"/>
    </location>
    <ligand>
        <name>Ca(2+)</name>
        <dbReference type="ChEBI" id="CHEBI:29108"/>
        <label>3</label>
    </ligand>
</feature>
<feature type="binding site" evidence="3">
    <location>
        <position position="251"/>
    </location>
    <ligand>
        <name>Ca(2+)</name>
        <dbReference type="ChEBI" id="CHEBI:29108"/>
        <label>3</label>
    </ligand>
</feature>
<feature type="binding site" evidence="3">
    <location>
        <position position="252"/>
    </location>
    <ligand>
        <name>Ca(2+)</name>
        <dbReference type="ChEBI" id="CHEBI:29108"/>
        <label>3</label>
    </ligand>
</feature>
<feature type="binding site" evidence="3">
    <location>
        <position position="254"/>
    </location>
    <ligand>
        <name>Ca(2+)</name>
        <dbReference type="ChEBI" id="CHEBI:29108"/>
        <label>1</label>
    </ligand>
</feature>
<feature type="binding site" evidence="3">
    <location>
        <position position="254"/>
    </location>
    <ligand>
        <name>Ca(2+)</name>
        <dbReference type="ChEBI" id="CHEBI:29108"/>
        <label>3</label>
    </ligand>
</feature>
<feature type="binding site" evidence="5">
    <location>
        <begin position="348"/>
        <end position="356"/>
    </location>
    <ligand>
        <name>ATP</name>
        <dbReference type="ChEBI" id="CHEBI:30616"/>
    </ligand>
</feature>
<feature type="binding site" evidence="5">
    <location>
        <position position="371"/>
    </location>
    <ligand>
        <name>ATP</name>
        <dbReference type="ChEBI" id="CHEBI:30616"/>
    </ligand>
</feature>
<feature type="modified residue" description="N-acetylalanine" evidence="2">
    <location>
        <position position="2"/>
    </location>
</feature>
<feature type="modified residue" description="Phosphoserine" evidence="2">
    <location>
        <position position="11"/>
    </location>
</feature>
<feature type="modified residue" description="Phosphoserine; by autocatalysis" evidence="3">
    <location>
        <position position="16"/>
    </location>
</feature>
<feature type="modified residue" description="Phosphothreonine; by autocatalysis" evidence="3">
    <location>
        <position position="17"/>
    </location>
</feature>
<feature type="modified residue" description="Phosphoserine" evidence="2">
    <location>
        <position position="206"/>
    </location>
</feature>
<feature type="modified residue" description="Phosphothreonine; by autocatalysis" evidence="1">
    <location>
        <position position="250"/>
    </location>
</feature>
<feature type="modified residue" description="Phosphothreonine; by autocatalysis" evidence="3">
    <location>
        <position position="314"/>
    </location>
</feature>
<feature type="modified residue" description="Phosphothreonine; by autocatalysis" evidence="3">
    <location>
        <position position="324"/>
    </location>
</feature>
<feature type="modified residue" description="Phosphothreonine; by PDPK1" evidence="2">
    <location>
        <position position="500"/>
    </location>
</feature>
<feature type="modified residue" description="Phosphothreonine" evidence="2">
    <location>
        <position position="504"/>
    </location>
</feature>
<feature type="modified residue" description="Phosphothreonine; by autocatalysis" evidence="3">
    <location>
        <position position="635"/>
    </location>
</feature>
<feature type="modified residue" description="Phosphothreonine; by autocatalysis" evidence="3">
    <location>
        <position position="642"/>
    </location>
</feature>
<feature type="modified residue" description="Phosphoserine" evidence="2">
    <location>
        <position position="661"/>
    </location>
</feature>
<feature type="modified residue" description="Phosphotyrosine; by SYK" evidence="14">
    <location>
        <position position="662"/>
    </location>
</feature>
<feature type="splice variant" id="VSP_041812" description="In isoform Beta-II." evidence="22">
    <original>RDKRDTSNFDKEFTRQPVELTPTDKLFIMNLDQNEFAGFSYTNPEFVINV</original>
    <variation>CGRNAENFDRFFTRHPPVLTPPDQEVIRNIDQSEFEGFSFVNSEFLKPEVKS</variation>
    <location>
        <begin position="622"/>
        <end position="671"/>
    </location>
</feature>
<feature type="modified residue" description="Phosphothreonine; by MTOR" evidence="20">
    <location sequence="P68404-2">
        <position position="634"/>
    </location>
</feature>
<feature type="modified residue" description="Phosphothreonine" evidence="24 25">
    <location sequence="P68404-2">
        <position position="641"/>
    </location>
</feature>
<feature type="modified residue" description="Phosphoserine" evidence="25">
    <location sequence="P68404-2">
        <position position="654"/>
    </location>
</feature>
<feature type="modified residue" description="Phosphoserine" evidence="25">
    <location sequence="P68404-2">
        <position position="660"/>
    </location>
</feature>
<feature type="modified residue" description="Phosphoserine" evidence="25">
    <location sequence="P68404-2">
        <position position="664"/>
    </location>
</feature>
<feature type="modified residue" description="Phosphoserine" evidence="25">
    <location sequence="P68404-2">
        <position position="673"/>
    </location>
</feature>
<comment type="function">
    <text evidence="2 10 11 12 13 15 16 17 18 21">Calcium-activated, phospholipid- and diacylglycerol (DAG)-dependent serine/threonine-protein kinase involved in various cellular processes such as regulation of the B-cell receptor (BCR) signalosome, oxidative stress-induced apoptosis, androgen receptor-dependent transcription regulation, insulin signaling and endothelial cells proliferation. Plays a key role in B-cell activation by regulating BCR-induced NF-kappa-B activation. Mediates the activation of the canonical NF-kappa-B pathway (NFKB1) by direct phosphorylation of CARD11/CARMA1 at 'Ser-559', 'Ser-644' and 'Ser-652'. Phosphorylation induces CARD11/CARMA1 association with lipid rafts and recruitment of the BCL10-MALT1 complex as well as MAP3K7/TAK1, which then activates IKK complex, resulting in nuclear translocation and activation of NFKB1. Plays a direct role in the negative feedback regulation of the BCR signaling, by down-modulating BTK function via direct phosphorylation of BTK at 'Ser-180', which results in the alteration of BTK plasma membrane localization and in turn inhibition of BTK activity. Involved in apoptosis following oxidative damage: in case of oxidative conditions, specifically phosphorylates 'Ser-36' of isoform p66Shc of SHC1, leading to mitochondrial accumulation of p66Shc, where p66Shc acts as a reactive oxygen species producer. Acts as a coactivator of androgen receptor (ANDR)-dependent transcription, by being recruited to ANDR target genes and specifically mediating phosphorylation of 'Thr-6' of histone H3 (H3T6ph), a specific tag for epigenetic transcriptional activation that prevents demethylation of histone H3 'Lys-4' (H3K4me) by LSD1/KDM1A. In insulin signaling, may function downstream of IRS1 in muscle cells and mediate insulin-dependent DNA synthesis through the RAF1-MAPK/ERK signaling cascade. Participates in the regulation of glucose transport in adipocytes by negatively modulating the insulin-stimulated translocation of the glucose transporter SLC2A4/GLUT4. Phosphorylates SLC2A1/GLUT1, promoting glucose uptake by SLC2A1/GLUT1. Under high glucose in pancreatic beta-cells, is probably involved in the inhibition of the insulin gene transcription, via regulation of MYC expression. In endothelial cells, activation of PRKCB induces increased phosphorylation of RB1, increased VEGFA-induced cell proliferation, and inhibits PI3K/AKT-dependent nitric oxide synthase (NOS3/eNOS) regulation by insulin, which causes endothelial dysfunction. Also involved in triglyceride homeostasis. Phosphorylates ATF2 which promotes cooperation between ATF2 and JUN, activating transcription (By similarity). Phosphorylates KLHL3 in response to angiotensin II signaling, decreasing the interaction between KLHL3 and WNK4 (By similarity). Phosphorylates and activates LRRK1, which phosphorylates RAB proteins involved in intracellular trafficking (By similarity).</text>
</comment>
<comment type="catalytic activity">
    <reaction evidence="2">
        <text>L-seryl-[protein] + ATP = O-phospho-L-seryl-[protein] + ADP + H(+)</text>
        <dbReference type="Rhea" id="RHEA:17989"/>
        <dbReference type="Rhea" id="RHEA-COMP:9863"/>
        <dbReference type="Rhea" id="RHEA-COMP:11604"/>
        <dbReference type="ChEBI" id="CHEBI:15378"/>
        <dbReference type="ChEBI" id="CHEBI:29999"/>
        <dbReference type="ChEBI" id="CHEBI:30616"/>
        <dbReference type="ChEBI" id="CHEBI:83421"/>
        <dbReference type="ChEBI" id="CHEBI:456216"/>
        <dbReference type="EC" id="2.7.11.13"/>
    </reaction>
</comment>
<comment type="catalytic activity">
    <reaction evidence="2">
        <text>L-threonyl-[protein] + ATP = O-phospho-L-threonyl-[protein] + ADP + H(+)</text>
        <dbReference type="Rhea" id="RHEA:46608"/>
        <dbReference type="Rhea" id="RHEA-COMP:11060"/>
        <dbReference type="Rhea" id="RHEA-COMP:11605"/>
        <dbReference type="ChEBI" id="CHEBI:15378"/>
        <dbReference type="ChEBI" id="CHEBI:30013"/>
        <dbReference type="ChEBI" id="CHEBI:30616"/>
        <dbReference type="ChEBI" id="CHEBI:61977"/>
        <dbReference type="ChEBI" id="CHEBI:456216"/>
        <dbReference type="EC" id="2.7.11.13"/>
    </reaction>
</comment>
<comment type="cofactor">
    <cofactor evidence="4">
        <name>Ca(2+)</name>
        <dbReference type="ChEBI" id="CHEBI:29108"/>
    </cofactor>
    <text evidence="3">Binds 3 Ca(2+) ions per subunit. The ions are bound to the C2 domain.</text>
</comment>
<comment type="activity regulation">
    <text evidence="1">Classical (or conventional) PKCs (PRKCA, PRKCB and PRKCG) are activated by calcium and diacylglycerol (DAG) in the presence of phosphatidylserine. Three specific sites; Thr-500 (activation loop of the kinase domain), Thr-642 (turn motif) and Ser-661 (hydrophobic region), need to be phosphorylated for its full activation. Specifically inhibited by enzastaurin (LY317615) (By similarity).</text>
</comment>
<comment type="subunit">
    <text evidence="1">Interacts with PDPK1/PDK1. Interacts in vitro with PRKCBP1. Interacts with PHLPP1 and PHLPP2; both proteins mediate its dephosphorylation. Interacts with KDM1A/LSD1, PKN1 and ANDR (By similarity).</text>
</comment>
<comment type="interaction">
    <interactant intactId="EBI-397048">
        <id>P68404</id>
    </interactant>
    <interactant intactId="EBI-527196">
        <id>Q13873</id>
        <label>BMPR2</label>
    </interactant>
    <organismsDiffer>true</organismsDiffer>
    <experiments>4</experiments>
</comment>
<comment type="interaction">
    <interactant intactId="EBI-397048">
        <id>P68404</id>
    </interactant>
    <interactant intactId="EBI-372243">
        <id>P56537</id>
        <label>EIF6</label>
    </interactant>
    <organismsDiffer>true</organismsDiffer>
    <experiments>2</experiments>
</comment>
<comment type="interaction">
    <interactant intactId="EBI-16063464">
        <id>P68404-2</id>
    </interactant>
    <interactant intactId="EBI-1030384">
        <id>P48736</id>
        <label>PIK3CG</label>
    </interactant>
    <organismsDiffer>true</organismsDiffer>
    <experiments>2</experiments>
</comment>
<comment type="subcellular location">
    <subcellularLocation>
        <location evidence="1">Cytoplasm</location>
    </subcellularLocation>
    <subcellularLocation>
        <location evidence="1">Nucleus</location>
    </subcellularLocation>
    <subcellularLocation>
        <location evidence="1">Membrane</location>
        <topology evidence="1">Peripheral membrane protein</topology>
    </subcellularLocation>
</comment>
<comment type="alternative products">
    <event type="alternative splicing"/>
    <isoform>
        <id>P68404-1</id>
        <name>Beta-I</name>
        <sequence type="displayed"/>
    </isoform>
    <isoform>
        <id>P68404-2</id>
        <name>Beta-II</name>
        <sequence type="described" ref="VSP_041812"/>
    </isoform>
</comment>
<comment type="PTM">
    <text evidence="1 14">Phosphorylation on Thr-500 within the activation loop renders it competent to autophosphorylate. Subsequent autophosphorylation of Thr-642 maintains catalytic competence, and autophosphorylation on Ser-661 appears to release the kinase into the cytosol. Autophosphorylation on other sites i.e. in the N-terminal and hinge regions have no effect on enzyme activity (By similarity). Phosphorylation at Tyr-662 by SYK induces binding with GRB2 and contributes to the activation of MAPK/ERK signaling cascade.</text>
</comment>
<comment type="PTM">
    <molecule>Isoform Beta-II</molecule>
    <text evidence="20">In response to growth factors, phosphorylated at Thr-634 by the mTORC2 complex, promoting autophosphorylation and activation.</text>
</comment>
<comment type="disruption phenotype">
    <text evidence="13 19 21">Mice develop an immunodeficiency characterized by impaired humoral immune responses and reduced cellular responses of B-cells similar to X-linked immunodeficiency (Xid). Mice are unable to activate NF-kappa-B and promote cell survival in B-cells upon BCR signaling, or even in mast cells. B-cells fail to recruit the I-kappa-B kinase (IKK) complex into lipid rafts, activate IKK, degrade I-kappa-B or up-regulate NF-kappa-B-dependent survival signals. Moreover, mutant animals are hyperphagic and exhibit higher food intake and reduced feed efficiency versus wild type. Mice are considerably leaner and display markedly decreased size of white fat depots. Triglyceride content in the liver and skeletal muscle is also significantly low.</text>
</comment>
<comment type="similarity">
    <text evidence="23">Belongs to the protein kinase superfamily. AGC Ser/Thr protein kinase family. PKC subfamily.</text>
</comment>
<keyword id="KW-0007">Acetylation</keyword>
<keyword id="KW-1064">Adaptive immunity</keyword>
<keyword id="KW-0025">Alternative splicing</keyword>
<keyword id="KW-0053">Apoptosis</keyword>
<keyword id="KW-0067">ATP-binding</keyword>
<keyword id="KW-0106">Calcium</keyword>
<keyword id="KW-0156">Chromatin regulator</keyword>
<keyword id="KW-0963">Cytoplasm</keyword>
<keyword id="KW-0391">Immunity</keyword>
<keyword id="KW-0418">Kinase</keyword>
<keyword id="KW-0472">Membrane</keyword>
<keyword id="KW-0479">Metal-binding</keyword>
<keyword id="KW-0547">Nucleotide-binding</keyword>
<keyword id="KW-0539">Nucleus</keyword>
<keyword id="KW-0597">Phosphoprotein</keyword>
<keyword id="KW-1185">Reference proteome</keyword>
<keyword id="KW-0677">Repeat</keyword>
<keyword id="KW-0723">Serine/threonine-protein kinase</keyword>
<keyword id="KW-0804">Transcription</keyword>
<keyword id="KW-0805">Transcription regulation</keyword>
<keyword id="KW-0808">Transferase</keyword>
<keyword id="KW-0862">Zinc</keyword>
<keyword id="KW-0863">Zinc-finger</keyword>
<sequence>MADPAAGPPPSEGEESTVRFARKGALRQKNVHEVKNHKFTARFFKQPTFCSHCTDFIWGFGKQGFQCQVCCFVVHKRCHEFVTFSCPGADKGPASDDPRSKHKFKIHTYSSPTFCDHCGSLLYGLIHQGMKCDTCMMNVHKRCVMNVPSLCGTDHTERRGRIYIQAHIDREVLIVVVRDAKNLVPMDPNGLSDPYVKLKLIPDPKSESKQKTKTIKCSLNPEWNETFRFQLKESDKDRRLSVEIWDWDLTSRNDFMGSLSFGISELQKAGVDGWFKLLSQEEGEYFNVPVPPEGSEGNEELRQKFERAKIGQGTKAPEEKTANTISKFDNNGNRDRMKLTDFNFLMVLGKGSFGKVMLSERKGTDELYAVKILKKDVVIQDDDVECTMVEKRVLALPGKPPFLTQLHSCFQTMDRLYFVMEYVNGGDLMYHIQQVGRFKEPHAVFYAAEIAIGLFFLQSKGIIYRDLKLDNVMLDSEGHIKIADFGMCKENIWDGVTTKTFCGTPDYIAPEIIAYQPYGKSVDWWAFGVLLYEMLAGQAPFEGEDEDELFQSIMEHNVAYPKSMSKEAVAICKGLMTKHPGKRLGCGPEGERDIKEHAFFRYIDWEKLERKEIQPPYKPKARDKRDTSNFDKEFTRQPVELTPTDKLFIMNLDQNEFAGFSYTNPEFVINV</sequence>
<protein>
    <recommendedName>
        <fullName>Protein kinase C beta type</fullName>
        <shortName>PKC-B</shortName>
        <shortName>PKC-beta</shortName>
        <ecNumber evidence="2">2.7.11.13</ecNumber>
    </recommendedName>
</protein>
<dbReference type="EC" id="2.7.11.13" evidence="2"/>
<dbReference type="EMBL" id="X53532">
    <property type="protein sequence ID" value="CAA37611.1"/>
    <property type="molecule type" value="mRNA"/>
</dbReference>
<dbReference type="EMBL" id="X59274">
    <property type="status" value="NOT_ANNOTATED_CDS"/>
    <property type="molecule type" value="mRNA"/>
</dbReference>
<dbReference type="EMBL" id="AC016522">
    <property type="status" value="NOT_ANNOTATED_CDS"/>
    <property type="molecule type" value="Genomic_DNA"/>
</dbReference>
<dbReference type="EMBL" id="AC122232">
    <property type="status" value="NOT_ANNOTATED_CDS"/>
    <property type="molecule type" value="Genomic_DNA"/>
</dbReference>
<dbReference type="EMBL" id="AC123837">
    <property type="status" value="NOT_ANNOTATED_CDS"/>
    <property type="molecule type" value="Genomic_DNA"/>
</dbReference>
<dbReference type="EMBL" id="AC151986">
    <property type="status" value="NOT_ANNOTATED_CDS"/>
    <property type="molecule type" value="Genomic_DNA"/>
</dbReference>
<dbReference type="EMBL" id="BC127083">
    <property type="protein sequence ID" value="AAI27084.1"/>
    <property type="molecule type" value="mRNA"/>
</dbReference>
<dbReference type="CCDS" id="CCDS21815.1">
    <molecule id="P68404-2"/>
</dbReference>
<dbReference type="CCDS" id="CCDS85402.1">
    <molecule id="P68404-1"/>
</dbReference>
<dbReference type="PIR" id="S11213">
    <property type="entry name" value="S11213"/>
</dbReference>
<dbReference type="RefSeq" id="NP_001303601.1">
    <molecule id="P68404-1"/>
    <property type="nucleotide sequence ID" value="NM_001316672.1"/>
</dbReference>
<dbReference type="RefSeq" id="NP_032881.1">
    <molecule id="P68404-2"/>
    <property type="nucleotide sequence ID" value="NM_008855.2"/>
</dbReference>
<dbReference type="SMR" id="P68404"/>
<dbReference type="BioGRID" id="202195">
    <property type="interactions" value="38"/>
</dbReference>
<dbReference type="CORUM" id="P68404"/>
<dbReference type="DIP" id="DIP-31583N"/>
<dbReference type="FunCoup" id="P68404">
    <property type="interactions" value="1872"/>
</dbReference>
<dbReference type="IntAct" id="P68404">
    <property type="interactions" value="16"/>
</dbReference>
<dbReference type="MINT" id="P68404"/>
<dbReference type="STRING" id="10090.ENSMUSP00000070019"/>
<dbReference type="ChEMBL" id="CHEMBL3042"/>
<dbReference type="GlyGen" id="P68404">
    <property type="glycosylation" value="2 sites, 1 N-linked glycan (1 site), 1 O-linked glycan (1 site)"/>
</dbReference>
<dbReference type="iPTMnet" id="P68404"/>
<dbReference type="PhosphoSitePlus" id="P68404"/>
<dbReference type="SwissPalm" id="P68404"/>
<dbReference type="jPOST" id="P68404"/>
<dbReference type="PaxDb" id="10090-ENSMUSP00000070019"/>
<dbReference type="PeptideAtlas" id="P68404"/>
<dbReference type="ProteomicsDB" id="264859">
    <molecule id="P68404-1"/>
</dbReference>
<dbReference type="ProteomicsDB" id="264860">
    <molecule id="P68404-2"/>
</dbReference>
<dbReference type="Pumba" id="P68404"/>
<dbReference type="Antibodypedia" id="3547">
    <property type="antibodies" value="867 antibodies from 46 providers"/>
</dbReference>
<dbReference type="DNASU" id="18751"/>
<dbReference type="Ensembl" id="ENSMUST00000064921.5">
    <molecule id="P68404-1"/>
    <property type="protein sequence ID" value="ENSMUSP00000064812.5"/>
    <property type="gene ID" value="ENSMUSG00000052889.12"/>
</dbReference>
<dbReference type="Ensembl" id="ENSMUST00000064989.12">
    <molecule id="P68404-2"/>
    <property type="protein sequence ID" value="ENSMUSP00000070019.6"/>
    <property type="gene ID" value="ENSMUSG00000052889.12"/>
</dbReference>
<dbReference type="Ensembl" id="ENSMUST00000143692.8">
    <molecule id="P68404-2"/>
    <property type="protein sequence ID" value="ENSMUSP00000138788.2"/>
    <property type="gene ID" value="ENSMUSG00000052889.12"/>
</dbReference>
<dbReference type="GeneID" id="18751"/>
<dbReference type="KEGG" id="mmu:18751"/>
<dbReference type="UCSC" id="uc009jot.1">
    <molecule id="P68404-1"/>
    <property type="organism name" value="mouse"/>
</dbReference>
<dbReference type="UCSC" id="uc009jou.1">
    <molecule id="P68404-2"/>
    <property type="organism name" value="mouse"/>
</dbReference>
<dbReference type="AGR" id="MGI:97596"/>
<dbReference type="CTD" id="5579"/>
<dbReference type="MGI" id="MGI:97596">
    <property type="gene designation" value="Prkcb"/>
</dbReference>
<dbReference type="VEuPathDB" id="HostDB:ENSMUSG00000052889"/>
<dbReference type="eggNOG" id="KOG0696">
    <property type="taxonomic scope" value="Eukaryota"/>
</dbReference>
<dbReference type="GeneTree" id="ENSGT00940000155217"/>
<dbReference type="HOGENOM" id="CLU_000288_54_2_1"/>
<dbReference type="InParanoid" id="P68404"/>
<dbReference type="OMA" id="VVXQLKE"/>
<dbReference type="OrthoDB" id="3664at9989"/>
<dbReference type="TreeFam" id="TF351133"/>
<dbReference type="BRENDA" id="2.7.11.13">
    <property type="organism ID" value="3474"/>
</dbReference>
<dbReference type="Reactome" id="R-MMU-114516">
    <property type="pathway name" value="Disinhibition of SNARE formation"/>
</dbReference>
<dbReference type="Reactome" id="R-MMU-1169091">
    <property type="pathway name" value="Activation of NF-kappaB in B cells"/>
</dbReference>
<dbReference type="Reactome" id="R-MMU-416993">
    <property type="pathway name" value="Trafficking of GluR2-containing AMPA receptors"/>
</dbReference>
<dbReference type="Reactome" id="R-MMU-4419969">
    <property type="pathway name" value="Depolymerization of the Nuclear Lamina"/>
</dbReference>
<dbReference type="Reactome" id="R-MMU-5099900">
    <property type="pathway name" value="WNT5A-dependent internalization of FZD4"/>
</dbReference>
<dbReference type="Reactome" id="R-MMU-5218921">
    <property type="pathway name" value="VEGFR2 mediated cell proliferation"/>
</dbReference>
<dbReference type="Reactome" id="R-MMU-5668599">
    <property type="pathway name" value="RHO GTPases Activate NADPH Oxidases"/>
</dbReference>
<dbReference type="Reactome" id="R-MMU-76005">
    <property type="pathway name" value="Response to elevated platelet cytosolic Ca2+"/>
</dbReference>
<dbReference type="BioGRID-ORCS" id="18751">
    <property type="hits" value="0 hits in 82 CRISPR screens"/>
</dbReference>
<dbReference type="ChiTaRS" id="Prkcb">
    <property type="organism name" value="mouse"/>
</dbReference>
<dbReference type="PRO" id="PR:P68404"/>
<dbReference type="Proteomes" id="UP000000589">
    <property type="component" value="Chromosome 7"/>
</dbReference>
<dbReference type="RNAct" id="P68404">
    <property type="molecule type" value="protein"/>
</dbReference>
<dbReference type="Bgee" id="ENSMUSG00000052889">
    <property type="expression patterns" value="Expressed in dorsal striatum and 246 other cell types or tissues"/>
</dbReference>
<dbReference type="GO" id="GO:0044305">
    <property type="term" value="C:calyx of Held"/>
    <property type="evidence" value="ECO:0000314"/>
    <property type="project" value="SynGO"/>
</dbReference>
<dbReference type="GO" id="GO:0005737">
    <property type="term" value="C:cytoplasm"/>
    <property type="evidence" value="ECO:0000314"/>
    <property type="project" value="MGI"/>
</dbReference>
<dbReference type="GO" id="GO:0016020">
    <property type="term" value="C:membrane"/>
    <property type="evidence" value="ECO:0000314"/>
    <property type="project" value="MGI"/>
</dbReference>
<dbReference type="GO" id="GO:0005654">
    <property type="term" value="C:nucleoplasm"/>
    <property type="evidence" value="ECO:0007669"/>
    <property type="project" value="Ensembl"/>
</dbReference>
<dbReference type="GO" id="GO:0005634">
    <property type="term" value="C:nucleus"/>
    <property type="evidence" value="ECO:0000314"/>
    <property type="project" value="MGI"/>
</dbReference>
<dbReference type="GO" id="GO:0005886">
    <property type="term" value="C:plasma membrane"/>
    <property type="evidence" value="ECO:0000314"/>
    <property type="project" value="MGI"/>
</dbReference>
<dbReference type="GO" id="GO:0099523">
    <property type="term" value="C:presynaptic cytosol"/>
    <property type="evidence" value="ECO:0000314"/>
    <property type="project" value="SynGO"/>
</dbReference>
<dbReference type="GO" id="GO:0008091">
    <property type="term" value="C:spectrin"/>
    <property type="evidence" value="ECO:0000314"/>
    <property type="project" value="CACAO"/>
</dbReference>
<dbReference type="GO" id="GO:0005524">
    <property type="term" value="F:ATP binding"/>
    <property type="evidence" value="ECO:0007669"/>
    <property type="project" value="UniProtKB-KW"/>
</dbReference>
<dbReference type="GO" id="GO:0005246">
    <property type="term" value="F:calcium channel regulator activity"/>
    <property type="evidence" value="ECO:0000314"/>
    <property type="project" value="MGI"/>
</dbReference>
<dbReference type="GO" id="GO:0004698">
    <property type="term" value="F:calcium,diacylglycerol-dependent serine/threonine kinase activity"/>
    <property type="evidence" value="ECO:0000314"/>
    <property type="project" value="MGI"/>
</dbReference>
<dbReference type="GO" id="GO:0003682">
    <property type="term" value="F:chromatin binding"/>
    <property type="evidence" value="ECO:0000250"/>
    <property type="project" value="UniProtKB"/>
</dbReference>
<dbReference type="GO" id="GO:0004697">
    <property type="term" value="F:diacylglycerol-dependent serine/threonine kinase activity"/>
    <property type="evidence" value="ECO:0000314"/>
    <property type="project" value="MGI"/>
</dbReference>
<dbReference type="GO" id="GO:0042393">
    <property type="term" value="F:histone binding"/>
    <property type="evidence" value="ECO:0000250"/>
    <property type="project" value="UniProtKB"/>
</dbReference>
<dbReference type="GO" id="GO:0035403">
    <property type="term" value="F:histone H3T6 kinase activity"/>
    <property type="evidence" value="ECO:0000250"/>
    <property type="project" value="UniProtKB"/>
</dbReference>
<dbReference type="GO" id="GO:0050681">
    <property type="term" value="F:nuclear androgen receptor binding"/>
    <property type="evidence" value="ECO:0000250"/>
    <property type="project" value="UniProtKB"/>
</dbReference>
<dbReference type="GO" id="GO:0005080">
    <property type="term" value="F:protein kinase C binding"/>
    <property type="evidence" value="ECO:0007669"/>
    <property type="project" value="Ensembl"/>
</dbReference>
<dbReference type="GO" id="GO:0106310">
    <property type="term" value="F:protein serine kinase activity"/>
    <property type="evidence" value="ECO:0007669"/>
    <property type="project" value="RHEA"/>
</dbReference>
<dbReference type="GO" id="GO:0004674">
    <property type="term" value="F:protein serine/threonine kinase activity"/>
    <property type="evidence" value="ECO:0000314"/>
    <property type="project" value="MGI"/>
</dbReference>
<dbReference type="GO" id="GO:0003713">
    <property type="term" value="F:transcription coactivator activity"/>
    <property type="evidence" value="ECO:0000250"/>
    <property type="project" value="UniProtKB"/>
</dbReference>
<dbReference type="GO" id="GO:0008270">
    <property type="term" value="F:zinc ion binding"/>
    <property type="evidence" value="ECO:0007669"/>
    <property type="project" value="UniProtKB-KW"/>
</dbReference>
<dbReference type="GO" id="GO:0002250">
    <property type="term" value="P:adaptive immune response"/>
    <property type="evidence" value="ECO:0007669"/>
    <property type="project" value="UniProtKB-KW"/>
</dbReference>
<dbReference type="GO" id="GO:0006915">
    <property type="term" value="P:apoptotic process"/>
    <property type="evidence" value="ECO:0007669"/>
    <property type="project" value="UniProtKB-KW"/>
</dbReference>
<dbReference type="GO" id="GO:0042113">
    <property type="term" value="P:B cell activation"/>
    <property type="evidence" value="ECO:0000315"/>
    <property type="project" value="UniProtKB"/>
</dbReference>
<dbReference type="GO" id="GO:0050853">
    <property type="term" value="P:B cell receptor signaling pathway"/>
    <property type="evidence" value="ECO:0000315"/>
    <property type="project" value="UniProtKB"/>
</dbReference>
<dbReference type="GO" id="GO:0006816">
    <property type="term" value="P:calcium ion transport"/>
    <property type="evidence" value="ECO:0000314"/>
    <property type="project" value="MGI"/>
</dbReference>
<dbReference type="GO" id="GO:0071322">
    <property type="term" value="P:cellular response to carbohydrate stimulus"/>
    <property type="evidence" value="ECO:0000314"/>
    <property type="project" value="MGI"/>
</dbReference>
<dbReference type="GO" id="GO:0006874">
    <property type="term" value="P:intracellular calcium ion homeostasis"/>
    <property type="evidence" value="ECO:0000314"/>
    <property type="project" value="MGI"/>
</dbReference>
<dbReference type="GO" id="GO:0010829">
    <property type="term" value="P:negative regulation of D-glucose transmembrane transport"/>
    <property type="evidence" value="ECO:0000315"/>
    <property type="project" value="UniProtKB"/>
</dbReference>
<dbReference type="GO" id="GO:0046627">
    <property type="term" value="P:negative regulation of insulin receptor signaling pathway"/>
    <property type="evidence" value="ECO:0000250"/>
    <property type="project" value="UniProtKB"/>
</dbReference>
<dbReference type="GO" id="GO:0007207">
    <property type="term" value="P:phospholipase C-activating G protein-coupled acetylcholine receptor signaling pathway"/>
    <property type="evidence" value="ECO:0000314"/>
    <property type="project" value="MGI"/>
</dbReference>
<dbReference type="GO" id="GO:0045766">
    <property type="term" value="P:positive regulation of angiogenesis"/>
    <property type="evidence" value="ECO:0000315"/>
    <property type="project" value="UniProtKB"/>
</dbReference>
<dbReference type="GO" id="GO:0043123">
    <property type="term" value="P:positive regulation of canonical NF-kappaB signal transduction"/>
    <property type="evidence" value="ECO:0000315"/>
    <property type="project" value="UniProtKB"/>
</dbReference>
<dbReference type="GO" id="GO:0032024">
    <property type="term" value="P:positive regulation of insulin secretion"/>
    <property type="evidence" value="ECO:0000314"/>
    <property type="project" value="MGI"/>
</dbReference>
<dbReference type="GO" id="GO:0030949">
    <property type="term" value="P:positive regulation of vascular endothelial growth factor receptor signaling pathway"/>
    <property type="evidence" value="ECO:0000315"/>
    <property type="project" value="UniProtKB"/>
</dbReference>
<dbReference type="GO" id="GO:0099171">
    <property type="term" value="P:presynaptic modulation of chemical synaptic transmission"/>
    <property type="evidence" value="ECO:0000314"/>
    <property type="project" value="SynGO"/>
</dbReference>
<dbReference type="GO" id="GO:0070528">
    <property type="term" value="P:protein kinase C signaling"/>
    <property type="evidence" value="ECO:0000250"/>
    <property type="project" value="UniProtKB"/>
</dbReference>
<dbReference type="GO" id="GO:0010827">
    <property type="term" value="P:regulation of D-glucose transmembrane transport"/>
    <property type="evidence" value="ECO:0000250"/>
    <property type="project" value="UniProtKB"/>
</dbReference>
<dbReference type="GO" id="GO:2000300">
    <property type="term" value="P:regulation of synaptic vesicle exocytosis"/>
    <property type="evidence" value="ECO:0000314"/>
    <property type="project" value="SynGO"/>
</dbReference>
<dbReference type="GO" id="GO:0006357">
    <property type="term" value="P:regulation of transcription by RNA polymerase II"/>
    <property type="evidence" value="ECO:0000250"/>
    <property type="project" value="UniProtKB"/>
</dbReference>
<dbReference type="GO" id="GO:0001666">
    <property type="term" value="P:response to hypoxia"/>
    <property type="evidence" value="ECO:0000314"/>
    <property type="project" value="MGI"/>
</dbReference>
<dbReference type="CDD" id="cd20833">
    <property type="entry name" value="C1_cPKC_rpt1"/>
    <property type="match status" value="1"/>
</dbReference>
<dbReference type="CDD" id="cd20836">
    <property type="entry name" value="C1_cPKC_rpt2"/>
    <property type="match status" value="1"/>
</dbReference>
<dbReference type="CDD" id="cd04026">
    <property type="entry name" value="C2_PKC_alpha_gamma"/>
    <property type="match status" value="1"/>
</dbReference>
<dbReference type="CDD" id="cd05616">
    <property type="entry name" value="STKc_cPKC_beta"/>
    <property type="match status" value="1"/>
</dbReference>
<dbReference type="FunFam" id="2.60.40.150:FF:000012">
    <property type="entry name" value="Kinase C alpha type"/>
    <property type="match status" value="1"/>
</dbReference>
<dbReference type="FunFam" id="1.10.510.10:FF:000023">
    <property type="entry name" value="Protein kinase C"/>
    <property type="match status" value="1"/>
</dbReference>
<dbReference type="FunFam" id="3.30.200.20:FF:000080">
    <property type="entry name" value="Protein kinase C"/>
    <property type="match status" value="1"/>
</dbReference>
<dbReference type="FunFam" id="3.30.60.20:FF:000006">
    <property type="entry name" value="Protein kinase C"/>
    <property type="match status" value="1"/>
</dbReference>
<dbReference type="FunFam" id="3.30.60.20:FF:000031">
    <property type="entry name" value="Protein kinase C alpha"/>
    <property type="match status" value="1"/>
</dbReference>
<dbReference type="Gene3D" id="3.30.60.20">
    <property type="match status" value="2"/>
</dbReference>
<dbReference type="Gene3D" id="2.60.40.150">
    <property type="entry name" value="C2 domain"/>
    <property type="match status" value="1"/>
</dbReference>
<dbReference type="Gene3D" id="3.30.200.20">
    <property type="entry name" value="Phosphorylase Kinase, domain 1"/>
    <property type="match status" value="2"/>
</dbReference>
<dbReference type="Gene3D" id="1.10.510.10">
    <property type="entry name" value="Transferase(Phosphotransferase) domain 1"/>
    <property type="match status" value="1"/>
</dbReference>
<dbReference type="InterPro" id="IPR000961">
    <property type="entry name" value="AGC-kinase_C"/>
</dbReference>
<dbReference type="InterPro" id="IPR046349">
    <property type="entry name" value="C1-like_sf"/>
</dbReference>
<dbReference type="InterPro" id="IPR000008">
    <property type="entry name" value="C2_dom"/>
</dbReference>
<dbReference type="InterPro" id="IPR035892">
    <property type="entry name" value="C2_domain_sf"/>
</dbReference>
<dbReference type="InterPro" id="IPR034664">
    <property type="entry name" value="cPKC-beta"/>
</dbReference>
<dbReference type="InterPro" id="IPR020454">
    <property type="entry name" value="DAG/PE-bd"/>
</dbReference>
<dbReference type="InterPro" id="IPR011009">
    <property type="entry name" value="Kinase-like_dom_sf"/>
</dbReference>
<dbReference type="InterPro" id="IPR002219">
    <property type="entry name" value="PE/DAG-bd"/>
</dbReference>
<dbReference type="InterPro" id="IPR017892">
    <property type="entry name" value="Pkinase_C"/>
</dbReference>
<dbReference type="InterPro" id="IPR000719">
    <property type="entry name" value="Prot_kinase_dom"/>
</dbReference>
<dbReference type="InterPro" id="IPR017441">
    <property type="entry name" value="Protein_kinase_ATP_BS"/>
</dbReference>
<dbReference type="InterPro" id="IPR014375">
    <property type="entry name" value="Protein_kinase_C_a/b/g"/>
</dbReference>
<dbReference type="InterPro" id="IPR008271">
    <property type="entry name" value="Ser/Thr_kinase_AS"/>
</dbReference>
<dbReference type="PANTHER" id="PTHR24351">
    <property type="entry name" value="RIBOSOMAL PROTEIN S6 KINASE"/>
    <property type="match status" value="1"/>
</dbReference>
<dbReference type="Pfam" id="PF00130">
    <property type="entry name" value="C1_1"/>
    <property type="match status" value="2"/>
</dbReference>
<dbReference type="Pfam" id="PF00168">
    <property type="entry name" value="C2"/>
    <property type="match status" value="1"/>
</dbReference>
<dbReference type="Pfam" id="PF00069">
    <property type="entry name" value="Pkinase"/>
    <property type="match status" value="1"/>
</dbReference>
<dbReference type="Pfam" id="PF00433">
    <property type="entry name" value="Pkinase_C"/>
    <property type="match status" value="1"/>
</dbReference>
<dbReference type="PIRSF" id="PIRSF000550">
    <property type="entry name" value="PKC_alpha"/>
    <property type="match status" value="1"/>
</dbReference>
<dbReference type="PRINTS" id="PR00360">
    <property type="entry name" value="C2DOMAIN"/>
</dbReference>
<dbReference type="PRINTS" id="PR00008">
    <property type="entry name" value="DAGPEDOMAIN"/>
</dbReference>
<dbReference type="SMART" id="SM00109">
    <property type="entry name" value="C1"/>
    <property type="match status" value="2"/>
</dbReference>
<dbReference type="SMART" id="SM00239">
    <property type="entry name" value="C2"/>
    <property type="match status" value="1"/>
</dbReference>
<dbReference type="SMART" id="SM00133">
    <property type="entry name" value="S_TK_X"/>
    <property type="match status" value="1"/>
</dbReference>
<dbReference type="SMART" id="SM00220">
    <property type="entry name" value="S_TKc"/>
    <property type="match status" value="1"/>
</dbReference>
<dbReference type="SUPFAM" id="SSF49562">
    <property type="entry name" value="C2 domain (Calcium/lipid-binding domain, CaLB)"/>
    <property type="match status" value="1"/>
</dbReference>
<dbReference type="SUPFAM" id="SSF57889">
    <property type="entry name" value="Cysteine-rich domain"/>
    <property type="match status" value="2"/>
</dbReference>
<dbReference type="SUPFAM" id="SSF56112">
    <property type="entry name" value="Protein kinase-like (PK-like)"/>
    <property type="match status" value="1"/>
</dbReference>
<dbReference type="PROSITE" id="PS51285">
    <property type="entry name" value="AGC_KINASE_CTER"/>
    <property type="match status" value="1"/>
</dbReference>
<dbReference type="PROSITE" id="PS50004">
    <property type="entry name" value="C2"/>
    <property type="match status" value="1"/>
</dbReference>
<dbReference type="PROSITE" id="PS00107">
    <property type="entry name" value="PROTEIN_KINASE_ATP"/>
    <property type="match status" value="1"/>
</dbReference>
<dbReference type="PROSITE" id="PS50011">
    <property type="entry name" value="PROTEIN_KINASE_DOM"/>
    <property type="match status" value="1"/>
</dbReference>
<dbReference type="PROSITE" id="PS00108">
    <property type="entry name" value="PROTEIN_KINASE_ST"/>
    <property type="match status" value="1"/>
</dbReference>
<dbReference type="PROSITE" id="PS00479">
    <property type="entry name" value="ZF_DAG_PE_1"/>
    <property type="match status" value="2"/>
</dbReference>
<dbReference type="PROSITE" id="PS50081">
    <property type="entry name" value="ZF_DAG_PE_2"/>
    <property type="match status" value="2"/>
</dbReference>